<keyword id="KW-0002">3D-structure</keyword>
<keyword id="KW-0963">Cytoplasm</keyword>
<keyword id="KW-0539">Nucleus</keyword>
<keyword id="KW-0653">Protein transport</keyword>
<keyword id="KW-1267">Proteomics identification</keyword>
<keyword id="KW-1185">Reference proteome</keyword>
<keyword id="KW-0677">Repeat</keyword>
<keyword id="KW-0813">Transport</keyword>
<feature type="chain" id="PRO_0000120758" description="Importin-13">
    <location>
        <begin position="1"/>
        <end position="963"/>
    </location>
</feature>
<feature type="repeat" description="HEAT 1" evidence="6">
    <location>
        <begin position="24"/>
        <end position="54"/>
    </location>
</feature>
<feature type="domain" description="Importin N-terminal" evidence="2">
    <location>
        <begin position="45"/>
        <end position="111"/>
    </location>
</feature>
<feature type="repeat" description="HEAT 2" evidence="6">
    <location>
        <begin position="56"/>
        <end position="88"/>
    </location>
</feature>
<feature type="repeat" description="HEAT 3" evidence="6">
    <location>
        <begin position="95"/>
        <end position="135"/>
    </location>
</feature>
<feature type="repeat" description="HEAT 4" evidence="6">
    <location>
        <begin position="142"/>
        <end position="179"/>
    </location>
</feature>
<feature type="repeat" description="HEAT 5" evidence="6">
    <location>
        <begin position="194"/>
        <end position="231"/>
    </location>
</feature>
<feature type="repeat" description="HEAT 6" evidence="6">
    <location>
        <begin position="236"/>
        <end position="268"/>
    </location>
</feature>
<feature type="repeat" description="HEAT 7" evidence="6">
    <location>
        <begin position="276"/>
        <end position="325"/>
    </location>
</feature>
<feature type="repeat" description="HEAT 8" evidence="6">
    <location>
        <begin position="330"/>
        <end position="372"/>
    </location>
</feature>
<feature type="repeat" description="HEAT 9" evidence="6">
    <location>
        <begin position="375"/>
        <end position="438"/>
    </location>
</feature>
<feature type="repeat" description="HEAT 10" evidence="6">
    <location>
        <begin position="440"/>
        <end position="476"/>
    </location>
</feature>
<feature type="repeat" description="HEAT 11" evidence="6">
    <location>
        <begin position="487"/>
        <end position="522"/>
    </location>
</feature>
<feature type="repeat" description="HEAT 12" evidence="6">
    <location>
        <begin position="524"/>
        <end position="558"/>
    </location>
</feature>
<feature type="repeat" description="HEAT 13" evidence="6">
    <location>
        <begin position="562"/>
        <end position="600"/>
    </location>
</feature>
<feature type="repeat" description="HEAT 14" evidence="6">
    <location>
        <begin position="603"/>
        <end position="648"/>
    </location>
</feature>
<feature type="repeat" description="HEAT 15" evidence="6">
    <location>
        <begin position="676"/>
        <end position="716"/>
    </location>
</feature>
<feature type="repeat" description="HEAT 16" evidence="6">
    <location>
        <begin position="720"/>
        <end position="754"/>
    </location>
</feature>
<feature type="repeat" description="HEAT 17" evidence="6">
    <location>
        <begin position="761"/>
        <end position="803"/>
    </location>
</feature>
<feature type="repeat" description="HEAT 18" evidence="6">
    <location>
        <begin position="815"/>
        <end position="845"/>
    </location>
</feature>
<feature type="repeat" description="HEAT 19" evidence="6">
    <location>
        <begin position="860"/>
        <end position="893"/>
    </location>
</feature>
<feature type="repeat" description="HEAT 20" evidence="6">
    <location>
        <begin position="897"/>
        <end position="931"/>
    </location>
</feature>
<feature type="sequence conflict" description="In Ref. 6; CAB55966." evidence="8" ref="6">
    <original>F</original>
    <variation>V</variation>
    <location>
        <position position="202"/>
    </location>
</feature>
<feature type="sequence conflict" description="In Ref. 7; BAB14575." evidence="8" ref="7">
    <original>T</original>
    <variation>A</variation>
    <location>
        <position position="715"/>
    </location>
</feature>
<feature type="sequence conflict" description="In Ref. 5; AAH08194." evidence="8" ref="5">
    <original>A</original>
    <variation>S</variation>
    <location>
        <position position="817"/>
    </location>
</feature>
<feature type="helix" evidence="9">
    <location>
        <begin position="23"/>
        <end position="35"/>
    </location>
</feature>
<feature type="helix" evidence="9">
    <location>
        <begin position="39"/>
        <end position="54"/>
    </location>
</feature>
<feature type="helix" evidence="9">
    <location>
        <begin position="58"/>
        <end position="65"/>
    </location>
</feature>
<feature type="helix" evidence="9">
    <location>
        <begin position="72"/>
        <end position="88"/>
    </location>
</feature>
<feature type="helix" evidence="9">
    <location>
        <begin position="90"/>
        <end position="92"/>
    </location>
</feature>
<feature type="helix" evidence="9">
    <location>
        <begin position="95"/>
        <end position="97"/>
    </location>
</feature>
<feature type="helix" evidence="9">
    <location>
        <begin position="98"/>
        <end position="111"/>
    </location>
</feature>
<feature type="turn" evidence="9">
    <location>
        <begin position="112"/>
        <end position="114"/>
    </location>
</feature>
<feature type="helix" evidence="9">
    <location>
        <begin position="117"/>
        <end position="134"/>
    </location>
</feature>
<feature type="turn" evidence="9">
    <location>
        <begin position="135"/>
        <end position="138"/>
    </location>
</feature>
<feature type="helix" evidence="9">
    <location>
        <begin position="142"/>
        <end position="150"/>
    </location>
</feature>
<feature type="helix" evidence="9">
    <location>
        <begin position="160"/>
        <end position="177"/>
    </location>
</feature>
<feature type="helix" evidence="9">
    <location>
        <begin position="195"/>
        <end position="197"/>
    </location>
</feature>
<feature type="helix" evidence="9">
    <location>
        <begin position="198"/>
        <end position="209"/>
    </location>
</feature>
<feature type="helix" evidence="9">
    <location>
        <begin position="216"/>
        <end position="230"/>
    </location>
</feature>
<feature type="turn" evidence="10">
    <location>
        <begin position="231"/>
        <end position="233"/>
    </location>
</feature>
<feature type="helix" evidence="9">
    <location>
        <begin position="236"/>
        <end position="238"/>
    </location>
</feature>
<feature type="helix" evidence="9">
    <location>
        <begin position="240"/>
        <end position="249"/>
    </location>
</feature>
<feature type="turn" evidence="9">
    <location>
        <begin position="253"/>
        <end position="255"/>
    </location>
</feature>
<feature type="helix" evidence="9">
    <location>
        <begin position="256"/>
        <end position="267"/>
    </location>
</feature>
<feature type="helix" evidence="9">
    <location>
        <begin position="272"/>
        <end position="274"/>
    </location>
</feature>
<feature type="helix" evidence="9">
    <location>
        <begin position="276"/>
        <end position="287"/>
    </location>
</feature>
<feature type="helix" evidence="9">
    <location>
        <begin position="290"/>
        <end position="298"/>
    </location>
</feature>
<feature type="helix" evidence="9">
    <location>
        <begin position="302"/>
        <end position="325"/>
    </location>
</feature>
<feature type="helix" evidence="9">
    <location>
        <begin position="327"/>
        <end position="329"/>
    </location>
</feature>
<feature type="helix" evidence="9">
    <location>
        <begin position="330"/>
        <end position="344"/>
    </location>
</feature>
<feature type="turn" evidence="9">
    <location>
        <begin position="350"/>
        <end position="353"/>
    </location>
</feature>
<feature type="helix" evidence="9">
    <location>
        <begin position="355"/>
        <end position="360"/>
    </location>
</feature>
<feature type="helix" evidence="9">
    <location>
        <begin position="361"/>
        <end position="371"/>
    </location>
</feature>
<feature type="helix" evidence="9">
    <location>
        <begin position="376"/>
        <end position="401"/>
    </location>
</feature>
<feature type="helix" evidence="9">
    <location>
        <begin position="406"/>
        <end position="410"/>
    </location>
</feature>
<feature type="helix" evidence="9">
    <location>
        <begin position="414"/>
        <end position="438"/>
    </location>
</feature>
<feature type="helix" evidence="9">
    <location>
        <begin position="440"/>
        <end position="455"/>
    </location>
</feature>
<feature type="helix" evidence="9">
    <location>
        <begin position="463"/>
        <end position="476"/>
    </location>
</feature>
<feature type="turn" evidence="10">
    <location>
        <begin position="483"/>
        <end position="486"/>
    </location>
</feature>
<feature type="helix" evidence="9">
    <location>
        <begin position="487"/>
        <end position="494"/>
    </location>
</feature>
<feature type="helix" evidence="9">
    <location>
        <begin position="495"/>
        <end position="497"/>
    </location>
</feature>
<feature type="helix" evidence="9">
    <location>
        <begin position="503"/>
        <end position="515"/>
    </location>
</feature>
<feature type="helix" evidence="9">
    <location>
        <begin position="517"/>
        <end position="522"/>
    </location>
</feature>
<feature type="helix" evidence="9">
    <location>
        <begin position="524"/>
        <end position="527"/>
    </location>
</feature>
<feature type="turn" evidence="9">
    <location>
        <begin position="528"/>
        <end position="530"/>
    </location>
</feature>
<feature type="helix" evidence="9">
    <location>
        <begin position="531"/>
        <end position="537"/>
    </location>
</feature>
<feature type="helix" evidence="9">
    <location>
        <begin position="541"/>
        <end position="543"/>
    </location>
</feature>
<feature type="helix" evidence="9">
    <location>
        <begin position="544"/>
        <end position="557"/>
    </location>
</feature>
<feature type="helix" evidence="9">
    <location>
        <begin position="559"/>
        <end position="561"/>
    </location>
</feature>
<feature type="turn" evidence="9">
    <location>
        <begin position="563"/>
        <end position="565"/>
    </location>
</feature>
<feature type="helix" evidence="9">
    <location>
        <begin position="566"/>
        <end position="578"/>
    </location>
</feature>
<feature type="helix" evidence="9">
    <location>
        <begin position="584"/>
        <end position="598"/>
    </location>
</feature>
<feature type="helix" evidence="9">
    <location>
        <begin position="603"/>
        <end position="625"/>
    </location>
</feature>
<feature type="helix" evidence="9">
    <location>
        <begin position="631"/>
        <end position="650"/>
    </location>
</feature>
<feature type="helix" evidence="9">
    <location>
        <begin position="676"/>
        <end position="695"/>
    </location>
</feature>
<feature type="helix" evidence="9">
    <location>
        <begin position="699"/>
        <end position="715"/>
    </location>
</feature>
<feature type="strand" evidence="9">
    <location>
        <begin position="716"/>
        <end position="718"/>
    </location>
</feature>
<feature type="helix" evidence="9">
    <location>
        <begin position="721"/>
        <end position="723"/>
    </location>
</feature>
<feature type="helix" evidence="9">
    <location>
        <begin position="724"/>
        <end position="737"/>
    </location>
</feature>
<feature type="helix" evidence="9">
    <location>
        <begin position="741"/>
        <end position="754"/>
    </location>
</feature>
<feature type="turn" evidence="9">
    <location>
        <begin position="758"/>
        <end position="760"/>
    </location>
</feature>
<feature type="helix" evidence="9">
    <location>
        <begin position="762"/>
        <end position="781"/>
    </location>
</feature>
<feature type="turn" evidence="9">
    <location>
        <begin position="783"/>
        <end position="785"/>
    </location>
</feature>
<feature type="helix" evidence="9">
    <location>
        <begin position="787"/>
        <end position="803"/>
    </location>
</feature>
<feature type="helix" evidence="9">
    <location>
        <begin position="805"/>
        <end position="809"/>
    </location>
</feature>
<feature type="helix" evidence="9">
    <location>
        <begin position="815"/>
        <end position="825"/>
    </location>
</feature>
<feature type="helix" evidence="9">
    <location>
        <begin position="831"/>
        <end position="844"/>
    </location>
</feature>
<feature type="helix" evidence="9">
    <location>
        <begin position="845"/>
        <end position="847"/>
    </location>
</feature>
<feature type="helix" evidence="9">
    <location>
        <begin position="853"/>
        <end position="857"/>
    </location>
</feature>
<feature type="turn" evidence="9">
    <location>
        <begin position="858"/>
        <end position="860"/>
    </location>
</feature>
<feature type="helix" evidence="9">
    <location>
        <begin position="862"/>
        <end position="873"/>
    </location>
</feature>
<feature type="turn" evidence="9">
    <location>
        <begin position="874"/>
        <end position="876"/>
    </location>
</feature>
<feature type="helix" evidence="9">
    <location>
        <begin position="879"/>
        <end position="881"/>
    </location>
</feature>
<feature type="helix" evidence="9">
    <location>
        <begin position="882"/>
        <end position="895"/>
    </location>
</feature>
<feature type="helix" evidence="9">
    <location>
        <begin position="897"/>
        <end position="907"/>
    </location>
</feature>
<feature type="helix" evidence="9">
    <location>
        <begin position="920"/>
        <end position="930"/>
    </location>
</feature>
<feature type="helix" evidence="9">
    <location>
        <begin position="937"/>
        <end position="952"/>
    </location>
</feature>
<gene>
    <name type="primary">IPO13</name>
    <name type="synonym">KIAA0724</name>
    <name type="synonym">RANBP13</name>
</gene>
<evidence type="ECO:0000250" key="1"/>
<evidence type="ECO:0000255" key="2">
    <source>
        <dbReference type="PROSITE-ProRule" id="PRU00115"/>
    </source>
</evidence>
<evidence type="ECO:0000269" key="3">
    <source>
    </source>
</evidence>
<evidence type="ECO:0000269" key="4">
    <source>
    </source>
</evidence>
<evidence type="ECO:0000269" key="5">
    <source>
    </source>
</evidence>
<evidence type="ECO:0000269" key="6">
    <source>
    </source>
</evidence>
<evidence type="ECO:0000269" key="7">
    <source>
    </source>
</evidence>
<evidence type="ECO:0000305" key="8"/>
<evidence type="ECO:0007829" key="9">
    <source>
        <dbReference type="PDB" id="2X19"/>
    </source>
</evidence>
<evidence type="ECO:0007829" key="10">
    <source>
        <dbReference type="PDB" id="2XWU"/>
    </source>
</evidence>
<name>IPO13_HUMAN</name>
<sequence length="963" mass="108195">MERREEQPGAAGAGAAPALDFTVENVEKALHQLYYDPNIENKNLAQKWLMQAQVSPQAWHFSWQLLQPDKVPEIQYFGASALHIKISRYWSDIPTDQYESLKAQLFTQITRFASGSKIVLTRLCVALASLALSMMPDAWPCAVADMVRLFQAEDSPVDGQGRCLALLELLTVLPEEFQTSRLPQYRKGLVRTSLAVECGAVFPLLEQLLQQPSSPSCVRQKVLKCFSSWVQLEVPLQDCEALIQAAFAALQDSELFDSSVEAIVNAISQPDAQRYVNTLLKLIPLVLGLQEQLRQAVQNGDMETSHGICRIAVALGENHSRALLDQVEHWQSFLALVNMIMFCTGIPGHYPVNETTSSLTLTFWYTLQDDILSFEAEKQAVYQQVYRPVYFQLVDVLLHKAQFPSDEEYGFWSSDEKEQFRIYRVDISDTLMYVYEMLGAELLSNLYDKLGRLLTSSEEPYSWQHTEALLYGFQSIAETIDVNYSDVVPGLIGLIPRISISNVQLADTVMFTIGALSEWLADHPVMINSVLPLVLHALGNPELSVSSVSTLKKICRECKYDLPPYAANIVAVSQDVLMKQIHKTSQCMWLMQALGFLLSALQVEEILKNLHSLISPYIQQLEKLAEEIPNPSNKLAIVHILGLLSNLFTTLDISHHEDDHEGPELRKLPVPQGPNPVVVVLQQVFQLIQKVLSKWLNDAQVVEAVCAIFEKSVKTLLDDFAPMVPQLCEMLGRMYSTIPQASALDLTRQLVHIFAHEPAHFPPIEALFLLVTSVTLTLFQQGPRDHPDIVDSFMQLLAQALKRKPDLFLCERLDVKAVFQCAVLALKFPEAPTVKASCGFFTELLPRCGEVESVGKVVQEDGRMLLIAVLEAIGGQASRSLMDCFADILFALNKHCFSLLSMWIKEALQPPGFPSARLSPEQKDTFSQQILRERVNKRRVKEMVKEFTLLCRGLHGTDYTADY</sequence>
<organism>
    <name type="scientific">Homo sapiens</name>
    <name type="common">Human</name>
    <dbReference type="NCBI Taxonomy" id="9606"/>
    <lineage>
        <taxon>Eukaryota</taxon>
        <taxon>Metazoa</taxon>
        <taxon>Chordata</taxon>
        <taxon>Craniata</taxon>
        <taxon>Vertebrata</taxon>
        <taxon>Euteleostomi</taxon>
        <taxon>Mammalia</taxon>
        <taxon>Eutheria</taxon>
        <taxon>Euarchontoglires</taxon>
        <taxon>Primates</taxon>
        <taxon>Haplorrhini</taxon>
        <taxon>Catarrhini</taxon>
        <taxon>Hominidae</taxon>
        <taxon>Homo</taxon>
    </lineage>
</organism>
<proteinExistence type="evidence at protein level"/>
<dbReference type="EMBL" id="AF267987">
    <property type="protein sequence ID" value="AAF73471.1"/>
    <property type="molecule type" value="mRNA"/>
</dbReference>
<dbReference type="EMBL" id="AB018267">
    <property type="protein sequence ID" value="BAA34444.2"/>
    <property type="status" value="ALT_INIT"/>
    <property type="molecule type" value="mRNA"/>
</dbReference>
<dbReference type="EMBL" id="AL357079">
    <property type="status" value="NOT_ANNOTATED_CDS"/>
    <property type="molecule type" value="Genomic_DNA"/>
</dbReference>
<dbReference type="EMBL" id="CH471059">
    <property type="protein sequence ID" value="EAX07072.1"/>
    <property type="molecule type" value="Genomic_DNA"/>
</dbReference>
<dbReference type="EMBL" id="CH471059">
    <property type="protein sequence ID" value="EAX07073.1"/>
    <property type="molecule type" value="Genomic_DNA"/>
</dbReference>
<dbReference type="EMBL" id="BC008194">
    <property type="protein sequence ID" value="AAH08194.1"/>
    <property type="molecule type" value="mRNA"/>
</dbReference>
<dbReference type="EMBL" id="AL117501">
    <property type="protein sequence ID" value="CAB55966.1"/>
    <property type="molecule type" value="mRNA"/>
</dbReference>
<dbReference type="EMBL" id="AK023441">
    <property type="protein sequence ID" value="BAB14575.1"/>
    <property type="status" value="ALT_INIT"/>
    <property type="molecule type" value="mRNA"/>
</dbReference>
<dbReference type="CCDS" id="CCDS503.1"/>
<dbReference type="PIR" id="T17276">
    <property type="entry name" value="T17276"/>
</dbReference>
<dbReference type="RefSeq" id="NP_055467.3">
    <property type="nucleotide sequence ID" value="NM_014652.3"/>
</dbReference>
<dbReference type="PDB" id="2X19">
    <property type="method" value="X-ray"/>
    <property type="resolution" value="2.80 A"/>
    <property type="chains" value="B=1-963"/>
</dbReference>
<dbReference type="PDB" id="2XWU">
    <property type="method" value="X-ray"/>
    <property type="resolution" value="2.80 A"/>
    <property type="chains" value="B=1-963"/>
</dbReference>
<dbReference type="PDB" id="3ZJY">
    <property type="method" value="X-ray"/>
    <property type="resolution" value="3.60 A"/>
    <property type="chains" value="B/E/G=1-963"/>
</dbReference>
<dbReference type="PDBsum" id="2X19"/>
<dbReference type="PDBsum" id="2XWU"/>
<dbReference type="PDBsum" id="3ZJY"/>
<dbReference type="SMR" id="O94829"/>
<dbReference type="BioGRID" id="115025">
    <property type="interactions" value="127"/>
</dbReference>
<dbReference type="CORUM" id="O94829"/>
<dbReference type="FunCoup" id="O94829">
    <property type="interactions" value="1496"/>
</dbReference>
<dbReference type="IntAct" id="O94829">
    <property type="interactions" value="75"/>
</dbReference>
<dbReference type="MINT" id="O94829"/>
<dbReference type="STRING" id="9606.ENSP00000361418"/>
<dbReference type="TCDB" id="1.I.1.1.3">
    <property type="family name" value="the nuclear pore complex (npc) family"/>
</dbReference>
<dbReference type="iPTMnet" id="O94829"/>
<dbReference type="PhosphoSitePlus" id="O94829"/>
<dbReference type="BioMuta" id="IPO13"/>
<dbReference type="jPOST" id="O94829"/>
<dbReference type="MassIVE" id="O94829"/>
<dbReference type="PaxDb" id="9606-ENSP00000361418"/>
<dbReference type="PeptideAtlas" id="O94829"/>
<dbReference type="ProteomicsDB" id="50474"/>
<dbReference type="Pumba" id="O94829"/>
<dbReference type="Antibodypedia" id="32405">
    <property type="antibodies" value="110 antibodies from 21 providers"/>
</dbReference>
<dbReference type="DNASU" id="9670"/>
<dbReference type="Ensembl" id="ENST00000372343.8">
    <property type="protein sequence ID" value="ENSP00000361418.3"/>
    <property type="gene ID" value="ENSG00000117408.11"/>
</dbReference>
<dbReference type="GeneID" id="9670"/>
<dbReference type="KEGG" id="hsa:9670"/>
<dbReference type="MANE-Select" id="ENST00000372343.8">
    <property type="protein sequence ID" value="ENSP00000361418.3"/>
    <property type="RefSeq nucleotide sequence ID" value="NM_014652.4"/>
    <property type="RefSeq protein sequence ID" value="NP_055467.3"/>
</dbReference>
<dbReference type="UCSC" id="uc001ckx.4">
    <property type="organism name" value="human"/>
</dbReference>
<dbReference type="AGR" id="HGNC:16853"/>
<dbReference type="CTD" id="9670"/>
<dbReference type="DisGeNET" id="9670"/>
<dbReference type="GeneCards" id="IPO13"/>
<dbReference type="HGNC" id="HGNC:16853">
    <property type="gene designation" value="IPO13"/>
</dbReference>
<dbReference type="HPA" id="ENSG00000117408">
    <property type="expression patterns" value="Tissue enhanced (skeletal)"/>
</dbReference>
<dbReference type="MalaCards" id="IPO13"/>
<dbReference type="MIM" id="610411">
    <property type="type" value="gene"/>
</dbReference>
<dbReference type="neXtProt" id="NX_O94829"/>
<dbReference type="OpenTargets" id="ENSG00000117408"/>
<dbReference type="PharmGKB" id="PA134981096"/>
<dbReference type="VEuPathDB" id="HostDB:ENSG00000117408"/>
<dbReference type="eggNOG" id="KOG2022">
    <property type="taxonomic scope" value="Eukaryota"/>
</dbReference>
<dbReference type="GeneTree" id="ENSGT00530000063347"/>
<dbReference type="HOGENOM" id="CLU_005996_3_0_1"/>
<dbReference type="InParanoid" id="O94829"/>
<dbReference type="OMA" id="KYPAEMA"/>
<dbReference type="OrthoDB" id="2016913at2759"/>
<dbReference type="PAN-GO" id="O94829">
    <property type="GO annotations" value="2 GO annotations based on evolutionary models"/>
</dbReference>
<dbReference type="PhylomeDB" id="O94829"/>
<dbReference type="TreeFam" id="TF314539"/>
<dbReference type="PathwayCommons" id="O94829"/>
<dbReference type="SignaLink" id="O94829"/>
<dbReference type="BioGRID-ORCS" id="9670">
    <property type="hits" value="751 hits in 1170 CRISPR screens"/>
</dbReference>
<dbReference type="ChiTaRS" id="IPO13">
    <property type="organism name" value="human"/>
</dbReference>
<dbReference type="EvolutionaryTrace" id="O94829"/>
<dbReference type="GeneWiki" id="IPO13"/>
<dbReference type="GenomeRNAi" id="9670"/>
<dbReference type="Pharos" id="O94829">
    <property type="development level" value="Tbio"/>
</dbReference>
<dbReference type="PRO" id="PR:O94829"/>
<dbReference type="Proteomes" id="UP000005640">
    <property type="component" value="Chromosome 1"/>
</dbReference>
<dbReference type="RNAct" id="O94829">
    <property type="molecule type" value="protein"/>
</dbReference>
<dbReference type="Bgee" id="ENSG00000117408">
    <property type="expression patterns" value="Expressed in C1 segment of cervical spinal cord and 201 other cell types or tissues"/>
</dbReference>
<dbReference type="ExpressionAtlas" id="O94829">
    <property type="expression patterns" value="baseline and differential"/>
</dbReference>
<dbReference type="GO" id="GO:0005737">
    <property type="term" value="C:cytoplasm"/>
    <property type="evidence" value="ECO:0000318"/>
    <property type="project" value="GO_Central"/>
</dbReference>
<dbReference type="GO" id="GO:0005634">
    <property type="term" value="C:nucleus"/>
    <property type="evidence" value="ECO:0007669"/>
    <property type="project" value="UniProtKB-SubCell"/>
</dbReference>
<dbReference type="GO" id="GO:0031267">
    <property type="term" value="F:small GTPase binding"/>
    <property type="evidence" value="ECO:0007669"/>
    <property type="project" value="InterPro"/>
</dbReference>
<dbReference type="GO" id="GO:0006606">
    <property type="term" value="P:protein import into nucleus"/>
    <property type="evidence" value="ECO:0000314"/>
    <property type="project" value="MGI"/>
</dbReference>
<dbReference type="FunFam" id="1.25.10.10:FF:000107">
    <property type="entry name" value="Importin-13"/>
    <property type="match status" value="1"/>
</dbReference>
<dbReference type="Gene3D" id="1.25.10.10">
    <property type="entry name" value="Leucine-rich Repeat Variant"/>
    <property type="match status" value="1"/>
</dbReference>
<dbReference type="InterPro" id="IPR011989">
    <property type="entry name" value="ARM-like"/>
</dbReference>
<dbReference type="InterPro" id="IPR016024">
    <property type="entry name" value="ARM-type_fold"/>
</dbReference>
<dbReference type="InterPro" id="IPR013598">
    <property type="entry name" value="Exportin-1/Importin-b-like"/>
</dbReference>
<dbReference type="InterPro" id="IPR001494">
    <property type="entry name" value="Importin-beta_N"/>
</dbReference>
<dbReference type="InterPro" id="IPR051345">
    <property type="entry name" value="Importin_beta-like_NTR"/>
</dbReference>
<dbReference type="InterPro" id="IPR040709">
    <property type="entry name" value="Importin_rep_1"/>
</dbReference>
<dbReference type="InterPro" id="IPR040944">
    <property type="entry name" value="Importin_rep_2"/>
</dbReference>
<dbReference type="InterPro" id="IPR040520">
    <property type="entry name" value="Importin_rep_3"/>
</dbReference>
<dbReference type="PANTHER" id="PTHR12363:SF33">
    <property type="entry name" value="IMPORTIN-13"/>
    <property type="match status" value="1"/>
</dbReference>
<dbReference type="PANTHER" id="PTHR12363">
    <property type="entry name" value="TRANSPORTIN 3 AND IMPORTIN 13"/>
    <property type="match status" value="1"/>
</dbReference>
<dbReference type="Pfam" id="PF03810">
    <property type="entry name" value="IBN_N"/>
    <property type="match status" value="1"/>
</dbReference>
<dbReference type="Pfam" id="PF18773">
    <property type="entry name" value="Importin_rep"/>
    <property type="match status" value="1"/>
</dbReference>
<dbReference type="Pfam" id="PF18786">
    <property type="entry name" value="Importin_rep_2"/>
    <property type="match status" value="2"/>
</dbReference>
<dbReference type="Pfam" id="PF18806">
    <property type="entry name" value="Importin_rep_3"/>
    <property type="match status" value="1"/>
</dbReference>
<dbReference type="Pfam" id="PF24138">
    <property type="entry name" value="TPR_TNPO3_IPO13_2nd"/>
    <property type="match status" value="1"/>
</dbReference>
<dbReference type="Pfam" id="PF24140">
    <property type="entry name" value="TPR_TNPO3_IPO13_3rd"/>
    <property type="match status" value="1"/>
</dbReference>
<dbReference type="Pfam" id="PF24139">
    <property type="entry name" value="TPR_TNPO3_IPO13_4th"/>
    <property type="match status" value="1"/>
</dbReference>
<dbReference type="Pfam" id="PF08389">
    <property type="entry name" value="Xpo1"/>
    <property type="match status" value="1"/>
</dbReference>
<dbReference type="SMART" id="SM00913">
    <property type="entry name" value="IBN_N"/>
    <property type="match status" value="1"/>
</dbReference>
<dbReference type="SUPFAM" id="SSF48371">
    <property type="entry name" value="ARM repeat"/>
    <property type="match status" value="1"/>
</dbReference>
<dbReference type="PROSITE" id="PS50166">
    <property type="entry name" value="IMPORTIN_B_NT"/>
    <property type="match status" value="1"/>
</dbReference>
<reference key="1">
    <citation type="journal article" date="2001" name="EMBO J.">
        <title>Importin 13: a novel mediator of nuclear import and export.</title>
        <authorList>
            <person name="Mingot J.-M."/>
            <person name="Kostka S."/>
            <person name="Kraft R."/>
            <person name="Hartmann E."/>
            <person name="Goerlich D."/>
        </authorList>
    </citation>
    <scope>NUCLEOTIDE SEQUENCE [MRNA]</scope>
    <scope>FUNCTION</scope>
    <scope>INTERACTION WITH RBM8A; UBC9 AND EIF1A</scope>
</reference>
<reference key="2">
    <citation type="journal article" date="1998" name="DNA Res.">
        <title>Prediction of the coding sequences of unidentified human genes. XI. The complete sequences of 100 new cDNA clones from brain which code for large proteins in vitro.</title>
        <authorList>
            <person name="Nagase T."/>
            <person name="Ishikawa K."/>
            <person name="Suyama M."/>
            <person name="Kikuno R."/>
            <person name="Miyajima N."/>
            <person name="Tanaka A."/>
            <person name="Kotani H."/>
            <person name="Nomura N."/>
            <person name="Ohara O."/>
        </authorList>
    </citation>
    <scope>NUCLEOTIDE SEQUENCE [LARGE SCALE MRNA]</scope>
    <source>
        <tissue>Brain</tissue>
    </source>
</reference>
<reference key="3">
    <citation type="journal article" date="2006" name="Nature">
        <title>The DNA sequence and biological annotation of human chromosome 1.</title>
        <authorList>
            <person name="Gregory S.G."/>
            <person name="Barlow K.F."/>
            <person name="McLay K.E."/>
            <person name="Kaul R."/>
            <person name="Swarbreck D."/>
            <person name="Dunham A."/>
            <person name="Scott C.E."/>
            <person name="Howe K.L."/>
            <person name="Woodfine K."/>
            <person name="Spencer C.C.A."/>
            <person name="Jones M.C."/>
            <person name="Gillson C."/>
            <person name="Searle S."/>
            <person name="Zhou Y."/>
            <person name="Kokocinski F."/>
            <person name="McDonald L."/>
            <person name="Evans R."/>
            <person name="Phillips K."/>
            <person name="Atkinson A."/>
            <person name="Cooper R."/>
            <person name="Jones C."/>
            <person name="Hall R.E."/>
            <person name="Andrews T.D."/>
            <person name="Lloyd C."/>
            <person name="Ainscough R."/>
            <person name="Almeida J.P."/>
            <person name="Ambrose K.D."/>
            <person name="Anderson F."/>
            <person name="Andrew R.W."/>
            <person name="Ashwell R.I.S."/>
            <person name="Aubin K."/>
            <person name="Babbage A.K."/>
            <person name="Bagguley C.L."/>
            <person name="Bailey J."/>
            <person name="Beasley H."/>
            <person name="Bethel G."/>
            <person name="Bird C.P."/>
            <person name="Bray-Allen S."/>
            <person name="Brown J.Y."/>
            <person name="Brown A.J."/>
            <person name="Buckley D."/>
            <person name="Burton J."/>
            <person name="Bye J."/>
            <person name="Carder C."/>
            <person name="Chapman J.C."/>
            <person name="Clark S.Y."/>
            <person name="Clarke G."/>
            <person name="Clee C."/>
            <person name="Cobley V."/>
            <person name="Collier R.E."/>
            <person name="Corby N."/>
            <person name="Coville G.J."/>
            <person name="Davies J."/>
            <person name="Deadman R."/>
            <person name="Dunn M."/>
            <person name="Earthrowl M."/>
            <person name="Ellington A.G."/>
            <person name="Errington H."/>
            <person name="Frankish A."/>
            <person name="Frankland J."/>
            <person name="French L."/>
            <person name="Garner P."/>
            <person name="Garnett J."/>
            <person name="Gay L."/>
            <person name="Ghori M.R.J."/>
            <person name="Gibson R."/>
            <person name="Gilby L.M."/>
            <person name="Gillett W."/>
            <person name="Glithero R.J."/>
            <person name="Grafham D.V."/>
            <person name="Griffiths C."/>
            <person name="Griffiths-Jones S."/>
            <person name="Grocock R."/>
            <person name="Hammond S."/>
            <person name="Harrison E.S.I."/>
            <person name="Hart E."/>
            <person name="Haugen E."/>
            <person name="Heath P.D."/>
            <person name="Holmes S."/>
            <person name="Holt K."/>
            <person name="Howden P.J."/>
            <person name="Hunt A.R."/>
            <person name="Hunt S.E."/>
            <person name="Hunter G."/>
            <person name="Isherwood J."/>
            <person name="James R."/>
            <person name="Johnson C."/>
            <person name="Johnson D."/>
            <person name="Joy A."/>
            <person name="Kay M."/>
            <person name="Kershaw J.K."/>
            <person name="Kibukawa M."/>
            <person name="Kimberley A.M."/>
            <person name="King A."/>
            <person name="Knights A.J."/>
            <person name="Lad H."/>
            <person name="Laird G."/>
            <person name="Lawlor S."/>
            <person name="Leongamornlert D.A."/>
            <person name="Lloyd D.M."/>
            <person name="Loveland J."/>
            <person name="Lovell J."/>
            <person name="Lush M.J."/>
            <person name="Lyne R."/>
            <person name="Martin S."/>
            <person name="Mashreghi-Mohammadi M."/>
            <person name="Matthews L."/>
            <person name="Matthews N.S.W."/>
            <person name="McLaren S."/>
            <person name="Milne S."/>
            <person name="Mistry S."/>
            <person name="Moore M.J.F."/>
            <person name="Nickerson T."/>
            <person name="O'Dell C.N."/>
            <person name="Oliver K."/>
            <person name="Palmeiri A."/>
            <person name="Palmer S.A."/>
            <person name="Parker A."/>
            <person name="Patel D."/>
            <person name="Pearce A.V."/>
            <person name="Peck A.I."/>
            <person name="Pelan S."/>
            <person name="Phelps K."/>
            <person name="Phillimore B.J."/>
            <person name="Plumb R."/>
            <person name="Rajan J."/>
            <person name="Raymond C."/>
            <person name="Rouse G."/>
            <person name="Saenphimmachak C."/>
            <person name="Sehra H.K."/>
            <person name="Sheridan E."/>
            <person name="Shownkeen R."/>
            <person name="Sims S."/>
            <person name="Skuce C.D."/>
            <person name="Smith M."/>
            <person name="Steward C."/>
            <person name="Subramanian S."/>
            <person name="Sycamore N."/>
            <person name="Tracey A."/>
            <person name="Tromans A."/>
            <person name="Van Helmond Z."/>
            <person name="Wall M."/>
            <person name="Wallis J.M."/>
            <person name="White S."/>
            <person name="Whitehead S.L."/>
            <person name="Wilkinson J.E."/>
            <person name="Willey D.L."/>
            <person name="Williams H."/>
            <person name="Wilming L."/>
            <person name="Wray P.W."/>
            <person name="Wu Z."/>
            <person name="Coulson A."/>
            <person name="Vaudin M."/>
            <person name="Sulston J.E."/>
            <person name="Durbin R.M."/>
            <person name="Hubbard T."/>
            <person name="Wooster R."/>
            <person name="Dunham I."/>
            <person name="Carter N.P."/>
            <person name="McVean G."/>
            <person name="Ross M.T."/>
            <person name="Harrow J."/>
            <person name="Olson M.V."/>
            <person name="Beck S."/>
            <person name="Rogers J."/>
            <person name="Bentley D.R."/>
        </authorList>
    </citation>
    <scope>NUCLEOTIDE SEQUENCE [LARGE SCALE GENOMIC DNA]</scope>
</reference>
<reference key="4">
    <citation type="submission" date="2005-09" db="EMBL/GenBank/DDBJ databases">
        <authorList>
            <person name="Mural R.J."/>
            <person name="Istrail S."/>
            <person name="Sutton G.G."/>
            <person name="Florea L."/>
            <person name="Halpern A.L."/>
            <person name="Mobarry C.M."/>
            <person name="Lippert R."/>
            <person name="Walenz B."/>
            <person name="Shatkay H."/>
            <person name="Dew I."/>
            <person name="Miller J.R."/>
            <person name="Flanigan M.J."/>
            <person name="Edwards N.J."/>
            <person name="Bolanos R."/>
            <person name="Fasulo D."/>
            <person name="Halldorsson B.V."/>
            <person name="Hannenhalli S."/>
            <person name="Turner R."/>
            <person name="Yooseph S."/>
            <person name="Lu F."/>
            <person name="Nusskern D.R."/>
            <person name="Shue B.C."/>
            <person name="Zheng X.H."/>
            <person name="Zhong F."/>
            <person name="Delcher A.L."/>
            <person name="Huson D.H."/>
            <person name="Kravitz S.A."/>
            <person name="Mouchard L."/>
            <person name="Reinert K."/>
            <person name="Remington K.A."/>
            <person name="Clark A.G."/>
            <person name="Waterman M.S."/>
            <person name="Eichler E.E."/>
            <person name="Adams M.D."/>
            <person name="Hunkapiller M.W."/>
            <person name="Myers E.W."/>
            <person name="Venter J.C."/>
        </authorList>
    </citation>
    <scope>NUCLEOTIDE SEQUENCE [LARGE SCALE GENOMIC DNA]</scope>
</reference>
<reference key="5">
    <citation type="journal article" date="2004" name="Genome Res.">
        <title>The status, quality, and expansion of the NIH full-length cDNA project: the Mammalian Gene Collection (MGC).</title>
        <authorList>
            <consortium name="The MGC Project Team"/>
        </authorList>
    </citation>
    <scope>NUCLEOTIDE SEQUENCE [LARGE SCALE MRNA]</scope>
    <source>
        <tissue>Cervix</tissue>
    </source>
</reference>
<reference key="6">
    <citation type="journal article" date="2007" name="BMC Genomics">
        <title>The full-ORF clone resource of the German cDNA consortium.</title>
        <authorList>
            <person name="Bechtel S."/>
            <person name="Rosenfelder H."/>
            <person name="Duda A."/>
            <person name="Schmidt C.P."/>
            <person name="Ernst U."/>
            <person name="Wellenreuther R."/>
            <person name="Mehrle A."/>
            <person name="Schuster C."/>
            <person name="Bahr A."/>
            <person name="Bloecker H."/>
            <person name="Heubner D."/>
            <person name="Hoerlein A."/>
            <person name="Michel G."/>
            <person name="Wedler H."/>
            <person name="Koehrer K."/>
            <person name="Ottenwaelder B."/>
            <person name="Poustka A."/>
            <person name="Wiemann S."/>
            <person name="Schupp I."/>
        </authorList>
    </citation>
    <scope>NUCLEOTIDE SEQUENCE [LARGE SCALE MRNA] OF 71-963</scope>
    <source>
        <tissue>Testis</tissue>
    </source>
</reference>
<reference key="7">
    <citation type="journal article" date="2004" name="Nat. Genet.">
        <title>Complete sequencing and characterization of 21,243 full-length human cDNAs.</title>
        <authorList>
            <person name="Ota T."/>
            <person name="Suzuki Y."/>
            <person name="Nishikawa T."/>
            <person name="Otsuki T."/>
            <person name="Sugiyama T."/>
            <person name="Irie R."/>
            <person name="Wakamatsu A."/>
            <person name="Hayashi K."/>
            <person name="Sato H."/>
            <person name="Nagai K."/>
            <person name="Kimura K."/>
            <person name="Makita H."/>
            <person name="Sekine M."/>
            <person name="Obayashi M."/>
            <person name="Nishi T."/>
            <person name="Shibahara T."/>
            <person name="Tanaka T."/>
            <person name="Ishii S."/>
            <person name="Yamamoto J."/>
            <person name="Saito K."/>
            <person name="Kawai Y."/>
            <person name="Isono Y."/>
            <person name="Nakamura Y."/>
            <person name="Nagahari K."/>
            <person name="Murakami K."/>
            <person name="Yasuda T."/>
            <person name="Iwayanagi T."/>
            <person name="Wagatsuma M."/>
            <person name="Shiratori A."/>
            <person name="Sudo H."/>
            <person name="Hosoiri T."/>
            <person name="Kaku Y."/>
            <person name="Kodaira H."/>
            <person name="Kondo H."/>
            <person name="Sugawara M."/>
            <person name="Takahashi M."/>
            <person name="Kanda K."/>
            <person name="Yokoi T."/>
            <person name="Furuya T."/>
            <person name="Kikkawa E."/>
            <person name="Omura Y."/>
            <person name="Abe K."/>
            <person name="Kamihara K."/>
            <person name="Katsuta N."/>
            <person name="Sato K."/>
            <person name="Tanikawa M."/>
            <person name="Yamazaki M."/>
            <person name="Ninomiya K."/>
            <person name="Ishibashi T."/>
            <person name="Yamashita H."/>
            <person name="Murakawa K."/>
            <person name="Fujimori K."/>
            <person name="Tanai H."/>
            <person name="Kimata M."/>
            <person name="Watanabe M."/>
            <person name="Hiraoka S."/>
            <person name="Chiba Y."/>
            <person name="Ishida S."/>
            <person name="Ono Y."/>
            <person name="Takiguchi S."/>
            <person name="Watanabe S."/>
            <person name="Yosida M."/>
            <person name="Hotuta T."/>
            <person name="Kusano J."/>
            <person name="Kanehori K."/>
            <person name="Takahashi-Fujii A."/>
            <person name="Hara H."/>
            <person name="Tanase T.-O."/>
            <person name="Nomura Y."/>
            <person name="Togiya S."/>
            <person name="Komai F."/>
            <person name="Hara R."/>
            <person name="Takeuchi K."/>
            <person name="Arita M."/>
            <person name="Imose N."/>
            <person name="Musashino K."/>
            <person name="Yuuki H."/>
            <person name="Oshima A."/>
            <person name="Sasaki N."/>
            <person name="Aotsuka S."/>
            <person name="Yoshikawa Y."/>
            <person name="Matsunawa H."/>
            <person name="Ichihara T."/>
            <person name="Shiohata N."/>
            <person name="Sano S."/>
            <person name="Moriya S."/>
            <person name="Momiyama H."/>
            <person name="Satoh N."/>
            <person name="Takami S."/>
            <person name="Terashima Y."/>
            <person name="Suzuki O."/>
            <person name="Nakagawa S."/>
            <person name="Senoh A."/>
            <person name="Mizoguchi H."/>
            <person name="Goto Y."/>
            <person name="Shimizu F."/>
            <person name="Wakebe H."/>
            <person name="Hishigaki H."/>
            <person name="Watanabe T."/>
            <person name="Sugiyama A."/>
            <person name="Takemoto M."/>
            <person name="Kawakami B."/>
            <person name="Yamazaki M."/>
            <person name="Watanabe K."/>
            <person name="Kumagai A."/>
            <person name="Itakura S."/>
            <person name="Fukuzumi Y."/>
            <person name="Fujimori Y."/>
            <person name="Komiyama M."/>
            <person name="Tashiro H."/>
            <person name="Tanigami A."/>
            <person name="Fujiwara T."/>
            <person name="Ono T."/>
            <person name="Yamada K."/>
            <person name="Fujii Y."/>
            <person name="Ozaki K."/>
            <person name="Hirao M."/>
            <person name="Ohmori Y."/>
            <person name="Kawabata A."/>
            <person name="Hikiji T."/>
            <person name="Kobatake N."/>
            <person name="Inagaki H."/>
            <person name="Ikema Y."/>
            <person name="Okamoto S."/>
            <person name="Okitani R."/>
            <person name="Kawakami T."/>
            <person name="Noguchi S."/>
            <person name="Itoh T."/>
            <person name="Shigeta K."/>
            <person name="Senba T."/>
            <person name="Matsumura K."/>
            <person name="Nakajima Y."/>
            <person name="Mizuno T."/>
            <person name="Morinaga M."/>
            <person name="Sasaki M."/>
            <person name="Togashi T."/>
            <person name="Oyama M."/>
            <person name="Hata H."/>
            <person name="Watanabe M."/>
            <person name="Komatsu T."/>
            <person name="Mizushima-Sugano J."/>
            <person name="Satoh T."/>
            <person name="Shirai Y."/>
            <person name="Takahashi Y."/>
            <person name="Nakagawa K."/>
            <person name="Okumura K."/>
            <person name="Nagase T."/>
            <person name="Nomura N."/>
            <person name="Kikuchi H."/>
            <person name="Masuho Y."/>
            <person name="Yamashita R."/>
            <person name="Nakai K."/>
            <person name="Yada T."/>
            <person name="Nakamura Y."/>
            <person name="Ohara O."/>
            <person name="Isogai T."/>
            <person name="Sugano S."/>
        </authorList>
    </citation>
    <scope>NUCLEOTIDE SEQUENCE [LARGE SCALE MRNA] OF 495-963</scope>
    <source>
        <tissue>Placenta</tissue>
    </source>
</reference>
<reference key="8">
    <citation type="journal article" date="2004" name="Mol. Cell. Biol.">
        <title>Paired-type homeodomain transcription factors are imported into the nucleus by karyopherin 13.</title>
        <authorList>
            <person name="Ploski J.E."/>
            <person name="Shamsher M.K."/>
            <person name="Radu A."/>
        </authorList>
    </citation>
    <scope>FUNCTION</scope>
    <scope>INTERACTION WITH PAX6</scope>
</reference>
<reference key="9">
    <citation type="journal article" date="2000" name="Am. J. Respir. Cell Mol. Biol.">
        <title>A novel karyopherin-beta homolog is developmentally and hormonally regulated in fetal lung.</title>
        <authorList>
            <person name="Zhang C."/>
            <person name="Sweezey N.B."/>
            <person name="Gagnon S."/>
            <person name="Muskat B."/>
            <person name="Koehler D."/>
            <person name="Post M."/>
            <person name="Kaplan F."/>
        </authorList>
    </citation>
    <scope>TISSUE SPECIFICITY</scope>
</reference>
<reference key="10">
    <citation type="journal article" date="2011" name="BMC Syst. Biol.">
        <title>Initial characterization of the human central proteome.</title>
        <authorList>
            <person name="Burkard T.R."/>
            <person name="Planyavsky M."/>
            <person name="Kaupe I."/>
            <person name="Breitwieser F.P."/>
            <person name="Buerckstuemmer T."/>
            <person name="Bennett K.L."/>
            <person name="Superti-Furga G."/>
            <person name="Colinge J."/>
        </authorList>
    </citation>
    <scope>IDENTIFICATION BY MASS SPECTROMETRY [LARGE SCALE ANALYSIS]</scope>
</reference>
<reference key="11">
    <citation type="journal article" date="2010" name="Mol. Cell">
        <title>Nuclear import mechanism of the EJC component Mago-Y14 revealed by structural studies of importin 13.</title>
        <authorList>
            <person name="Bono F."/>
            <person name="Cook A.G."/>
            <person name="Grunwald M."/>
            <person name="Ebert J."/>
            <person name="Conti E."/>
        </authorList>
    </citation>
    <scope>X-RAY CRYSTALLOGRAPHY (2.8 ANGSTROMS) IN COMPLEX WITH YEAST GSP1/RAN</scope>
    <scope>REPEAT STRUCTURE</scope>
</reference>
<reference key="12">
    <citation type="journal article" date="2011" name="EMBO J.">
        <title>Structure of Importin13-Ubc9 complex: nuclear import and release of a key regulator of sumoylation.</title>
        <authorList>
            <person name="Grunwald M."/>
            <person name="Bono F."/>
        </authorList>
    </citation>
    <scope>X-RAY CRYSTALLOGRAPHY (2.8 ANGSTROMS) IN COMPLEX WITH UBE2I/UBC</scope>
</reference>
<comment type="function">
    <text evidence="1 4 5">Functions in nuclear protein import as nuclear transport receptor. Serves as receptor for nuclear localization signals (NLS) in cargo substrates. Is thought to mediate docking of the importin/substrate complex to the nuclear pore complex (NPC) through binding to nucleoporin and the complex is subsequently translocated through the pore by an energy requiring, Ran-dependent mechanism. At the nucleoplasmic side of the NPC, Ran binds to the importin, the importin/substrate complex dissociates and importin is re-exported from the nucleus to the cytoplasm where GTP hydrolysis releases Ran. The directionality of nuclear import is thought to be conferred by an asymmetric distribution of the GTP- and GDP-bound forms of Ran between the cytoplasm and nucleus (By similarity). Mediates the nuclear import of UBC9, the RBM8A/MAGOH complex, PAX6 and probably other members of the paired homeobox family. Also mediates nuclear export of eIF-1A, and the cytoplasmic release of eIF-1A is triggered by the loading of import substrates onto IPO13.</text>
</comment>
<comment type="subunit">
    <text evidence="4 5 6 7">Interacts with UBC9, RAN, RBM8A, eIF-1A and PAX6.</text>
</comment>
<comment type="interaction">
    <interactant intactId="EBI-747310">
        <id>O94829</id>
    </interactant>
    <interactant intactId="EBI-750671">
        <id>Q15699</id>
        <label>ALX1</label>
    </interactant>
    <organismsDiffer>false</organismsDiffer>
    <experiments>2</experiments>
</comment>
<comment type="interaction">
    <interactant intactId="EBI-747310">
        <id>O94829</id>
    </interactant>
    <interactant intactId="EBI-11599882">
        <id>Q6RFH8</id>
        <label>DUX4L9</label>
    </interactant>
    <organismsDiffer>false</organismsDiffer>
    <experiments>2</experiments>
</comment>
<comment type="interaction">
    <interactant intactId="EBI-747310">
        <id>O94829</id>
    </interactant>
    <interactant intactId="EBI-1045377">
        <id>P47813</id>
        <label>EIF1AX</label>
    </interactant>
    <organismsDiffer>false</organismsDiffer>
    <experiments>14</experiments>
</comment>
<comment type="interaction">
    <interactant intactId="EBI-747310">
        <id>O94829</id>
    </interactant>
    <interactant intactId="EBI-2549423">
        <id>Q6NT76</id>
        <label>HMBOX1</label>
    </interactant>
    <organismsDiffer>false</organismsDiffer>
    <experiments>3</experiments>
</comment>
<comment type="interaction">
    <interactant intactId="EBI-747310">
        <id>O94829</id>
    </interactant>
    <interactant intactId="EBI-299134">
        <id>P61326</id>
        <label>MAGOH</label>
    </interactant>
    <organismsDiffer>false</organismsDiffer>
    <experiments>4</experiments>
</comment>
<comment type="interaction">
    <interactant intactId="EBI-747310">
        <id>O94829</id>
    </interactant>
    <interactant intactId="EBI-12105196">
        <id>P23760-8</id>
        <label>PAX3</label>
    </interactant>
    <organismsDiffer>false</organismsDiffer>
    <experiments>3</experiments>
</comment>
<comment type="interaction">
    <interactant intactId="EBI-747310">
        <id>O94829</id>
    </interactant>
    <interactant intactId="EBI-10302990">
        <id>Q9BYU1</id>
        <label>PBX4</label>
    </interactant>
    <organismsDiffer>false</organismsDiffer>
    <experiments>8</experiments>
</comment>
<comment type="interaction">
    <interactant intactId="EBI-747310">
        <id>O94829</id>
    </interactant>
    <interactant intactId="EBI-748265">
        <id>P78337</id>
        <label>PITX1</label>
    </interactant>
    <organismsDiffer>false</organismsDiffer>
    <experiments>4</experiments>
</comment>
<comment type="interaction">
    <interactant intactId="EBI-747310">
        <id>O94829</id>
    </interactant>
    <interactant intactId="EBI-359352">
        <id>P25786</id>
        <label>PSMA1</label>
    </interactant>
    <organismsDiffer>false</organismsDiffer>
    <experiments>3</experiments>
</comment>
<comment type="interaction">
    <interactant intactId="EBI-747310">
        <id>O94829</id>
    </interactant>
    <interactant intactId="EBI-286642">
        <id>P62826</id>
        <label>RAN</label>
    </interactant>
    <organismsDiffer>false</organismsDiffer>
    <experiments>13</experiments>
</comment>
<comment type="interaction">
    <interactant intactId="EBI-747310">
        <id>O94829</id>
    </interactant>
    <interactant intactId="EBI-80168">
        <id>P63279</id>
        <label>UBE2I</label>
    </interactant>
    <organismsDiffer>false</organismsDiffer>
    <experiments>6</experiments>
</comment>
<comment type="subcellular location">
    <subcellularLocation>
        <location>Cytoplasm</location>
    </subcellularLocation>
    <subcellularLocation>
        <location>Nucleus</location>
    </subcellularLocation>
</comment>
<comment type="tissue specificity">
    <text evidence="3">Expressed in fetal brain, heart, intestine and kidney.</text>
</comment>
<comment type="similarity">
    <text evidence="8">Belongs to the importin beta family.</text>
</comment>
<comment type="sequence caution" evidence="8">
    <conflict type="erroneous initiation">
        <sequence resource="EMBL-CDS" id="BAA34444"/>
    </conflict>
    <text>Extended N-terminus.</text>
</comment>
<comment type="sequence caution" evidence="8">
    <conflict type="erroneous initiation">
        <sequence resource="EMBL-CDS" id="BAB14575"/>
    </conflict>
    <text>Truncated N-terminus.</text>
</comment>
<protein>
    <recommendedName>
        <fullName>Importin-13</fullName>
        <shortName>Imp13</shortName>
    </recommendedName>
    <alternativeName>
        <fullName>Karyopherin-13</fullName>
        <shortName>Kap13</shortName>
    </alternativeName>
    <alternativeName>
        <fullName>Ran-binding protein 13</fullName>
        <shortName>RanBP13</shortName>
    </alternativeName>
</protein>
<accession>O94829</accession>
<accession>D3DPY4</accession>
<accession>Q5T4X3</accession>
<accession>Q7LC04</accession>
<accession>Q96HS3</accession>
<accession>Q9H8N3</accession>
<accession>Q9UFR1</accession>